<reference key="1">
    <citation type="journal article" date="2007" name="PLoS ONE">
        <title>Molecular correlates of host specialization in Staphylococcus aureus.</title>
        <authorList>
            <person name="Herron-Olson L."/>
            <person name="Fitzgerald J.R."/>
            <person name="Musser J.M."/>
            <person name="Kapur V."/>
        </authorList>
    </citation>
    <scope>NUCLEOTIDE SEQUENCE [LARGE SCALE GENOMIC DNA]</scope>
    <source>
        <strain>bovine RF122 / ET3-1</strain>
    </source>
</reference>
<gene>
    <name evidence="1" type="primary">gatC</name>
    <name type="ordered locus">SAB1834c</name>
</gene>
<protein>
    <recommendedName>
        <fullName evidence="1">Aspartyl/glutamyl-tRNA(Asn/Gln) amidotransferase subunit C</fullName>
        <shortName evidence="1">Asp/Glu-ADT subunit C</shortName>
        <ecNumber evidence="1">6.3.5.-</ecNumber>
    </recommendedName>
</protein>
<comment type="function">
    <text evidence="1">Allows the formation of correctly charged Asn-tRNA(Asn) or Gln-tRNA(Gln) through the transamidation of misacylated Asp-tRNA(Asn) or Glu-tRNA(Gln) in organisms which lack either or both of asparaginyl-tRNA or glutaminyl-tRNA synthetases. The reaction takes place in the presence of glutamine and ATP through an activated phospho-Asp-tRNA(Asn) or phospho-Glu-tRNA(Gln).</text>
</comment>
<comment type="catalytic activity">
    <reaction evidence="1">
        <text>L-glutamyl-tRNA(Gln) + L-glutamine + ATP + H2O = L-glutaminyl-tRNA(Gln) + L-glutamate + ADP + phosphate + H(+)</text>
        <dbReference type="Rhea" id="RHEA:17521"/>
        <dbReference type="Rhea" id="RHEA-COMP:9681"/>
        <dbReference type="Rhea" id="RHEA-COMP:9684"/>
        <dbReference type="ChEBI" id="CHEBI:15377"/>
        <dbReference type="ChEBI" id="CHEBI:15378"/>
        <dbReference type="ChEBI" id="CHEBI:29985"/>
        <dbReference type="ChEBI" id="CHEBI:30616"/>
        <dbReference type="ChEBI" id="CHEBI:43474"/>
        <dbReference type="ChEBI" id="CHEBI:58359"/>
        <dbReference type="ChEBI" id="CHEBI:78520"/>
        <dbReference type="ChEBI" id="CHEBI:78521"/>
        <dbReference type="ChEBI" id="CHEBI:456216"/>
    </reaction>
</comment>
<comment type="catalytic activity">
    <reaction evidence="1">
        <text>L-aspartyl-tRNA(Asn) + L-glutamine + ATP + H2O = L-asparaginyl-tRNA(Asn) + L-glutamate + ADP + phosphate + 2 H(+)</text>
        <dbReference type="Rhea" id="RHEA:14513"/>
        <dbReference type="Rhea" id="RHEA-COMP:9674"/>
        <dbReference type="Rhea" id="RHEA-COMP:9677"/>
        <dbReference type="ChEBI" id="CHEBI:15377"/>
        <dbReference type="ChEBI" id="CHEBI:15378"/>
        <dbReference type="ChEBI" id="CHEBI:29985"/>
        <dbReference type="ChEBI" id="CHEBI:30616"/>
        <dbReference type="ChEBI" id="CHEBI:43474"/>
        <dbReference type="ChEBI" id="CHEBI:58359"/>
        <dbReference type="ChEBI" id="CHEBI:78515"/>
        <dbReference type="ChEBI" id="CHEBI:78516"/>
        <dbReference type="ChEBI" id="CHEBI:456216"/>
    </reaction>
</comment>
<comment type="subunit">
    <text evidence="1">Heterotrimer of A, B and C subunits.</text>
</comment>
<comment type="similarity">
    <text evidence="1">Belongs to the GatC family.</text>
</comment>
<accession>Q2YU75</accession>
<name>GATC_STAAB</name>
<feature type="chain" id="PRO_1000016217" description="Aspartyl/glutamyl-tRNA(Asn/Gln) amidotransferase subunit C">
    <location>
        <begin position="1"/>
        <end position="100"/>
    </location>
</feature>
<sequence>MTKVTREEVEHIANLARLQISPEETEEMANTLESILDFAKQNDSADTEGVEPTYHVLDLQNVLREDKAIKGIPQELALKNAKETEDGQFKVPTIMNEEDA</sequence>
<proteinExistence type="inferred from homology"/>
<evidence type="ECO:0000255" key="1">
    <source>
        <dbReference type="HAMAP-Rule" id="MF_00122"/>
    </source>
</evidence>
<keyword id="KW-0067">ATP-binding</keyword>
<keyword id="KW-0436">Ligase</keyword>
<keyword id="KW-0547">Nucleotide-binding</keyword>
<keyword id="KW-0648">Protein biosynthesis</keyword>
<dbReference type="EC" id="6.3.5.-" evidence="1"/>
<dbReference type="EMBL" id="AJ938182">
    <property type="protein sequence ID" value="CAI81523.1"/>
    <property type="molecule type" value="Genomic_DNA"/>
</dbReference>
<dbReference type="RefSeq" id="WP_000170162.1">
    <property type="nucleotide sequence ID" value="NC_007622.1"/>
</dbReference>
<dbReference type="SMR" id="Q2YU75"/>
<dbReference type="GeneID" id="98346286"/>
<dbReference type="KEGG" id="sab:SAB1834c"/>
<dbReference type="HOGENOM" id="CLU_105899_1_2_9"/>
<dbReference type="GO" id="GO:0050566">
    <property type="term" value="F:asparaginyl-tRNA synthase (glutamine-hydrolyzing) activity"/>
    <property type="evidence" value="ECO:0007669"/>
    <property type="project" value="RHEA"/>
</dbReference>
<dbReference type="GO" id="GO:0005524">
    <property type="term" value="F:ATP binding"/>
    <property type="evidence" value="ECO:0007669"/>
    <property type="project" value="UniProtKB-KW"/>
</dbReference>
<dbReference type="GO" id="GO:0050567">
    <property type="term" value="F:glutaminyl-tRNA synthase (glutamine-hydrolyzing) activity"/>
    <property type="evidence" value="ECO:0007669"/>
    <property type="project" value="UniProtKB-UniRule"/>
</dbReference>
<dbReference type="GO" id="GO:0070681">
    <property type="term" value="P:glutaminyl-tRNAGln biosynthesis via transamidation"/>
    <property type="evidence" value="ECO:0007669"/>
    <property type="project" value="TreeGrafter"/>
</dbReference>
<dbReference type="GO" id="GO:0006450">
    <property type="term" value="P:regulation of translational fidelity"/>
    <property type="evidence" value="ECO:0007669"/>
    <property type="project" value="InterPro"/>
</dbReference>
<dbReference type="GO" id="GO:0006412">
    <property type="term" value="P:translation"/>
    <property type="evidence" value="ECO:0007669"/>
    <property type="project" value="UniProtKB-UniRule"/>
</dbReference>
<dbReference type="Gene3D" id="1.10.20.60">
    <property type="entry name" value="Glu-tRNAGln amidotransferase C subunit, N-terminal domain"/>
    <property type="match status" value="1"/>
</dbReference>
<dbReference type="HAMAP" id="MF_00122">
    <property type="entry name" value="GatC"/>
    <property type="match status" value="1"/>
</dbReference>
<dbReference type="InterPro" id="IPR036113">
    <property type="entry name" value="Asp/Glu-ADT_sf_sub_c"/>
</dbReference>
<dbReference type="InterPro" id="IPR003837">
    <property type="entry name" value="GatC"/>
</dbReference>
<dbReference type="NCBIfam" id="TIGR00135">
    <property type="entry name" value="gatC"/>
    <property type="match status" value="1"/>
</dbReference>
<dbReference type="PANTHER" id="PTHR15004">
    <property type="entry name" value="GLUTAMYL-TRNA(GLN) AMIDOTRANSFERASE SUBUNIT C, MITOCHONDRIAL"/>
    <property type="match status" value="1"/>
</dbReference>
<dbReference type="PANTHER" id="PTHR15004:SF0">
    <property type="entry name" value="GLUTAMYL-TRNA(GLN) AMIDOTRANSFERASE SUBUNIT C, MITOCHONDRIAL"/>
    <property type="match status" value="1"/>
</dbReference>
<dbReference type="Pfam" id="PF02686">
    <property type="entry name" value="GatC"/>
    <property type="match status" value="1"/>
</dbReference>
<dbReference type="SUPFAM" id="SSF141000">
    <property type="entry name" value="Glu-tRNAGln amidotransferase C subunit"/>
    <property type="match status" value="1"/>
</dbReference>
<organism>
    <name type="scientific">Staphylococcus aureus (strain bovine RF122 / ET3-1)</name>
    <dbReference type="NCBI Taxonomy" id="273036"/>
    <lineage>
        <taxon>Bacteria</taxon>
        <taxon>Bacillati</taxon>
        <taxon>Bacillota</taxon>
        <taxon>Bacilli</taxon>
        <taxon>Bacillales</taxon>
        <taxon>Staphylococcaceae</taxon>
        <taxon>Staphylococcus</taxon>
    </lineage>
</organism>